<proteinExistence type="inferred from homology"/>
<comment type="function">
    <text evidence="1">Catalyzes the interconversion of L-alanine and D-alanine. May also act on other amino acids.</text>
</comment>
<comment type="catalytic activity">
    <reaction evidence="1">
        <text>L-alanine = D-alanine</text>
        <dbReference type="Rhea" id="RHEA:20249"/>
        <dbReference type="ChEBI" id="CHEBI:57416"/>
        <dbReference type="ChEBI" id="CHEBI:57972"/>
        <dbReference type="EC" id="5.1.1.1"/>
    </reaction>
</comment>
<comment type="cofactor">
    <cofactor evidence="1">
        <name>pyridoxal 5'-phosphate</name>
        <dbReference type="ChEBI" id="CHEBI:597326"/>
    </cofactor>
</comment>
<comment type="pathway">
    <text evidence="1">Amino-acid biosynthesis; D-alanine biosynthesis; D-alanine from L-alanine: step 1/1.</text>
</comment>
<comment type="similarity">
    <text evidence="1">Belongs to the alanine racemase family.</text>
</comment>
<protein>
    <recommendedName>
        <fullName evidence="1">Alanine racemase</fullName>
        <ecNumber evidence="1">5.1.1.1</ecNumber>
    </recommendedName>
</protein>
<gene>
    <name type="primary">alr</name>
    <name type="ordered locus">SSP0807</name>
</gene>
<accession>Q49Z24</accession>
<name>ALR_STAS1</name>
<dbReference type="EC" id="5.1.1.1" evidence="1"/>
<dbReference type="EMBL" id="AP008934">
    <property type="protein sequence ID" value="BAE17952.1"/>
    <property type="molecule type" value="Genomic_DNA"/>
</dbReference>
<dbReference type="RefSeq" id="WP_011302701.1">
    <property type="nucleotide sequence ID" value="NC_007350.1"/>
</dbReference>
<dbReference type="SMR" id="Q49Z24"/>
<dbReference type="GeneID" id="3615774"/>
<dbReference type="KEGG" id="ssp:SSP0807"/>
<dbReference type="PATRIC" id="fig|342451.11.peg.809"/>
<dbReference type="eggNOG" id="COG0787">
    <property type="taxonomic scope" value="Bacteria"/>
</dbReference>
<dbReference type="HOGENOM" id="CLU_028393_2_1_9"/>
<dbReference type="OrthoDB" id="9813814at2"/>
<dbReference type="UniPathway" id="UPA00042">
    <property type="reaction ID" value="UER00497"/>
</dbReference>
<dbReference type="Proteomes" id="UP000006371">
    <property type="component" value="Chromosome"/>
</dbReference>
<dbReference type="GO" id="GO:0005829">
    <property type="term" value="C:cytosol"/>
    <property type="evidence" value="ECO:0007669"/>
    <property type="project" value="TreeGrafter"/>
</dbReference>
<dbReference type="GO" id="GO:0008784">
    <property type="term" value="F:alanine racemase activity"/>
    <property type="evidence" value="ECO:0007669"/>
    <property type="project" value="UniProtKB-UniRule"/>
</dbReference>
<dbReference type="GO" id="GO:0030170">
    <property type="term" value="F:pyridoxal phosphate binding"/>
    <property type="evidence" value="ECO:0007669"/>
    <property type="project" value="UniProtKB-UniRule"/>
</dbReference>
<dbReference type="GO" id="GO:0030632">
    <property type="term" value="P:D-alanine biosynthetic process"/>
    <property type="evidence" value="ECO:0007669"/>
    <property type="project" value="UniProtKB-UniRule"/>
</dbReference>
<dbReference type="GO" id="GO:0009252">
    <property type="term" value="P:peptidoglycan biosynthetic process"/>
    <property type="evidence" value="ECO:0007669"/>
    <property type="project" value="TreeGrafter"/>
</dbReference>
<dbReference type="CDD" id="cd00430">
    <property type="entry name" value="PLPDE_III_AR"/>
    <property type="match status" value="1"/>
</dbReference>
<dbReference type="FunFam" id="2.40.37.10:FF:000006">
    <property type="entry name" value="Alanine racemase"/>
    <property type="match status" value="1"/>
</dbReference>
<dbReference type="FunFam" id="3.20.20.10:FF:000002">
    <property type="entry name" value="Alanine racemase"/>
    <property type="match status" value="1"/>
</dbReference>
<dbReference type="Gene3D" id="3.20.20.10">
    <property type="entry name" value="Alanine racemase"/>
    <property type="match status" value="1"/>
</dbReference>
<dbReference type="Gene3D" id="2.40.37.10">
    <property type="entry name" value="Lyase, Ornithine Decarboxylase, Chain A, domain 1"/>
    <property type="match status" value="1"/>
</dbReference>
<dbReference type="HAMAP" id="MF_01201">
    <property type="entry name" value="Ala_racemase"/>
    <property type="match status" value="1"/>
</dbReference>
<dbReference type="InterPro" id="IPR000821">
    <property type="entry name" value="Ala_racemase"/>
</dbReference>
<dbReference type="InterPro" id="IPR009006">
    <property type="entry name" value="Ala_racemase/Decarboxylase_C"/>
</dbReference>
<dbReference type="InterPro" id="IPR011079">
    <property type="entry name" value="Ala_racemase_C"/>
</dbReference>
<dbReference type="InterPro" id="IPR001608">
    <property type="entry name" value="Ala_racemase_N"/>
</dbReference>
<dbReference type="InterPro" id="IPR020622">
    <property type="entry name" value="Ala_racemase_pyridoxalP-BS"/>
</dbReference>
<dbReference type="InterPro" id="IPR029066">
    <property type="entry name" value="PLP-binding_barrel"/>
</dbReference>
<dbReference type="NCBIfam" id="TIGR00492">
    <property type="entry name" value="alr"/>
    <property type="match status" value="1"/>
</dbReference>
<dbReference type="PANTHER" id="PTHR30511">
    <property type="entry name" value="ALANINE RACEMASE"/>
    <property type="match status" value="1"/>
</dbReference>
<dbReference type="PANTHER" id="PTHR30511:SF0">
    <property type="entry name" value="ALANINE RACEMASE, CATABOLIC-RELATED"/>
    <property type="match status" value="1"/>
</dbReference>
<dbReference type="Pfam" id="PF00842">
    <property type="entry name" value="Ala_racemase_C"/>
    <property type="match status" value="1"/>
</dbReference>
<dbReference type="Pfam" id="PF01168">
    <property type="entry name" value="Ala_racemase_N"/>
    <property type="match status" value="1"/>
</dbReference>
<dbReference type="PRINTS" id="PR00992">
    <property type="entry name" value="ALARACEMASE"/>
</dbReference>
<dbReference type="SMART" id="SM01005">
    <property type="entry name" value="Ala_racemase_C"/>
    <property type="match status" value="1"/>
</dbReference>
<dbReference type="SUPFAM" id="SSF50621">
    <property type="entry name" value="Alanine racemase C-terminal domain-like"/>
    <property type="match status" value="1"/>
</dbReference>
<dbReference type="SUPFAM" id="SSF51419">
    <property type="entry name" value="PLP-binding barrel"/>
    <property type="match status" value="1"/>
</dbReference>
<dbReference type="PROSITE" id="PS00395">
    <property type="entry name" value="ALANINE_RACEMASE"/>
    <property type="match status" value="1"/>
</dbReference>
<evidence type="ECO:0000255" key="1">
    <source>
        <dbReference type="HAMAP-Rule" id="MF_01201"/>
    </source>
</evidence>
<sequence>MSDKYYRSTYVNVDLNAIVANFQVFQKLHPNKTVMPVVKANGYGLGSIKVARQLMDNGAEFFAVATLDEAIELRMHGIDAKILVLGVIPTEHINKAIQHRVAITVPSKSWLVEAVKEIPESNEKDLWIHVKLDTGMGRLGMKTAEEYKEVIELINGHSHLIFEGVFTHFACADEPGDSMNRQQTMFEEIVGQADKPDYIHSQNSAGALMKDTQFCNAVRVGISLYGYYPSAYVKSNVKVHLKPSAQWISEIVQTKLLHAGESVSYGSVYTADEKTKIGVIPVGYADGYPRMMKGFSVNVNGKQCEVIGKVCMDQTIIKIPDEIQVGDKVIIMDHHSDTPQSAEALAHQQQTINYEVLCRLSRRLPRVYHSSKDLEIRNELLK</sequence>
<organism>
    <name type="scientific">Staphylococcus saprophyticus subsp. saprophyticus (strain ATCC 15305 / DSM 20229 / NCIMB 8711 / NCTC 7292 / S-41)</name>
    <dbReference type="NCBI Taxonomy" id="342451"/>
    <lineage>
        <taxon>Bacteria</taxon>
        <taxon>Bacillati</taxon>
        <taxon>Bacillota</taxon>
        <taxon>Bacilli</taxon>
        <taxon>Bacillales</taxon>
        <taxon>Staphylococcaceae</taxon>
        <taxon>Staphylococcus</taxon>
    </lineage>
</organism>
<reference key="1">
    <citation type="journal article" date="2005" name="Proc. Natl. Acad. Sci. U.S.A.">
        <title>Whole genome sequence of Staphylococcus saprophyticus reveals the pathogenesis of uncomplicated urinary tract infection.</title>
        <authorList>
            <person name="Kuroda M."/>
            <person name="Yamashita A."/>
            <person name="Hirakawa H."/>
            <person name="Kumano M."/>
            <person name="Morikawa K."/>
            <person name="Higashide M."/>
            <person name="Maruyama A."/>
            <person name="Inose Y."/>
            <person name="Matoba K."/>
            <person name="Toh H."/>
            <person name="Kuhara S."/>
            <person name="Hattori M."/>
            <person name="Ohta T."/>
        </authorList>
    </citation>
    <scope>NUCLEOTIDE SEQUENCE [LARGE SCALE GENOMIC DNA]</scope>
    <source>
        <strain>ATCC 15305 / DSM 20229 / NCIMB 8711 / NCTC 7292 / S-41</strain>
    </source>
</reference>
<feature type="chain" id="PRO_1000138624" description="Alanine racemase">
    <location>
        <begin position="1"/>
        <end position="382"/>
    </location>
</feature>
<feature type="active site" description="Proton acceptor; specific for D-alanine" evidence="1">
    <location>
        <position position="39"/>
    </location>
</feature>
<feature type="active site" description="Proton acceptor; specific for L-alanine" evidence="1">
    <location>
        <position position="265"/>
    </location>
</feature>
<feature type="binding site" evidence="1">
    <location>
        <position position="138"/>
    </location>
    <ligand>
        <name>substrate</name>
    </ligand>
</feature>
<feature type="binding site" evidence="1">
    <location>
        <position position="312"/>
    </location>
    <ligand>
        <name>substrate</name>
    </ligand>
</feature>
<feature type="modified residue" description="N6-(pyridoxal phosphate)lysine" evidence="1">
    <location>
        <position position="39"/>
    </location>
</feature>
<keyword id="KW-0413">Isomerase</keyword>
<keyword id="KW-0663">Pyridoxal phosphate</keyword>
<keyword id="KW-1185">Reference proteome</keyword>